<comment type="function">
    <text evidence="1">An accessory protein needed during the final step in the assembly of 30S ribosomal subunit, possibly for assembly of the head region. Essential for efficient processing of 16S rRNA. May be needed both before and after RbfA during the maturation of 16S rRNA. It has affinity for free ribosomal 30S subunits but not for 70S ribosomes.</text>
</comment>
<comment type="subunit">
    <text evidence="1">Binds ribosomal protein uS19.</text>
</comment>
<comment type="subcellular location">
    <subcellularLocation>
        <location evidence="1">Cytoplasm</location>
    </subcellularLocation>
</comment>
<comment type="domain">
    <text evidence="1">The PRC barrel domain binds ribosomal protein uS19.</text>
</comment>
<comment type="similarity">
    <text evidence="1">Belongs to the RimM family.</text>
</comment>
<gene>
    <name evidence="1" type="primary">rimM</name>
    <name type="ordered locus">C8J_0679</name>
</gene>
<keyword id="KW-0143">Chaperone</keyword>
<keyword id="KW-0963">Cytoplasm</keyword>
<keyword id="KW-0690">Ribosome biogenesis</keyword>
<keyword id="KW-0698">rRNA processing</keyword>
<name>RIMM_CAMJ8</name>
<proteinExistence type="inferred from homology"/>
<dbReference type="EMBL" id="CP000814">
    <property type="protein sequence ID" value="ABV52278.1"/>
    <property type="molecule type" value="Genomic_DNA"/>
</dbReference>
<dbReference type="RefSeq" id="WP_002855099.1">
    <property type="nucleotide sequence ID" value="NC_009839.1"/>
</dbReference>
<dbReference type="SMR" id="A8FLE1"/>
<dbReference type="KEGG" id="cju:C8J_0679"/>
<dbReference type="HOGENOM" id="CLU_077636_2_0_7"/>
<dbReference type="GO" id="GO:0005737">
    <property type="term" value="C:cytoplasm"/>
    <property type="evidence" value="ECO:0007669"/>
    <property type="project" value="UniProtKB-SubCell"/>
</dbReference>
<dbReference type="GO" id="GO:0005840">
    <property type="term" value="C:ribosome"/>
    <property type="evidence" value="ECO:0007669"/>
    <property type="project" value="InterPro"/>
</dbReference>
<dbReference type="GO" id="GO:0043022">
    <property type="term" value="F:ribosome binding"/>
    <property type="evidence" value="ECO:0007669"/>
    <property type="project" value="InterPro"/>
</dbReference>
<dbReference type="GO" id="GO:0042274">
    <property type="term" value="P:ribosomal small subunit biogenesis"/>
    <property type="evidence" value="ECO:0007669"/>
    <property type="project" value="UniProtKB-UniRule"/>
</dbReference>
<dbReference type="GO" id="GO:0006364">
    <property type="term" value="P:rRNA processing"/>
    <property type="evidence" value="ECO:0007669"/>
    <property type="project" value="UniProtKB-UniRule"/>
</dbReference>
<dbReference type="Gene3D" id="2.30.30.240">
    <property type="entry name" value="PRC-barrel domain"/>
    <property type="match status" value="1"/>
</dbReference>
<dbReference type="Gene3D" id="2.40.30.60">
    <property type="entry name" value="RimM"/>
    <property type="match status" value="1"/>
</dbReference>
<dbReference type="HAMAP" id="MF_00014">
    <property type="entry name" value="Ribosome_mat_RimM"/>
    <property type="match status" value="1"/>
</dbReference>
<dbReference type="InterPro" id="IPR027275">
    <property type="entry name" value="PRC-brl_dom"/>
</dbReference>
<dbReference type="InterPro" id="IPR011033">
    <property type="entry name" value="PRC_barrel-like_sf"/>
</dbReference>
<dbReference type="InterPro" id="IPR011961">
    <property type="entry name" value="RimM"/>
</dbReference>
<dbReference type="InterPro" id="IPR002676">
    <property type="entry name" value="RimM_N"/>
</dbReference>
<dbReference type="InterPro" id="IPR036976">
    <property type="entry name" value="RimM_N_sf"/>
</dbReference>
<dbReference type="InterPro" id="IPR009000">
    <property type="entry name" value="Transl_B-barrel_sf"/>
</dbReference>
<dbReference type="NCBIfam" id="TIGR02273">
    <property type="entry name" value="16S_RimM"/>
    <property type="match status" value="1"/>
</dbReference>
<dbReference type="PANTHER" id="PTHR33692">
    <property type="entry name" value="RIBOSOME MATURATION FACTOR RIMM"/>
    <property type="match status" value="1"/>
</dbReference>
<dbReference type="PANTHER" id="PTHR33692:SF1">
    <property type="entry name" value="RIBOSOME MATURATION FACTOR RIMM"/>
    <property type="match status" value="1"/>
</dbReference>
<dbReference type="Pfam" id="PF05239">
    <property type="entry name" value="PRC"/>
    <property type="match status" value="1"/>
</dbReference>
<dbReference type="Pfam" id="PF01782">
    <property type="entry name" value="RimM"/>
    <property type="match status" value="1"/>
</dbReference>
<dbReference type="SUPFAM" id="SSF50346">
    <property type="entry name" value="PRC-barrel domain"/>
    <property type="match status" value="1"/>
</dbReference>
<dbReference type="SUPFAM" id="SSF50447">
    <property type="entry name" value="Translation proteins"/>
    <property type="match status" value="1"/>
</dbReference>
<feature type="chain" id="PRO_1000070958" description="Ribosome maturation factor RimM">
    <location>
        <begin position="1"/>
        <end position="179"/>
    </location>
</feature>
<feature type="domain" description="PRC barrel" evidence="1">
    <location>
        <begin position="95"/>
        <end position="174"/>
    </location>
</feature>
<accession>A8FLE1</accession>
<evidence type="ECO:0000255" key="1">
    <source>
        <dbReference type="HAMAP-Rule" id="MF_00014"/>
    </source>
</evidence>
<reference key="1">
    <citation type="journal article" date="2007" name="J. Bacteriol.">
        <title>The complete genome sequence of Campylobacter jejuni strain 81116 (NCTC11828).</title>
        <authorList>
            <person name="Pearson B.M."/>
            <person name="Gaskin D.J.H."/>
            <person name="Segers R.P.A.M."/>
            <person name="Wells J.M."/>
            <person name="Nuijten P.J.M."/>
            <person name="van Vliet A.H.M."/>
        </authorList>
    </citation>
    <scope>NUCLEOTIDE SEQUENCE [LARGE SCALE GENOMIC DNA]</scope>
    <source>
        <strain>81116 / NCTC 11828</strain>
    </source>
</reference>
<sequence>MSEKDFVQVAKLGKTVGLKGYVKLHNLSDFSSQFKKDATFFIKNTKEMLKIKHYNASNSTVLFENYEDIEKAKELINLILFQSIEKSRQTCKLKKDEFFYFDILECEVFEEDKRLGKVIDILETGASYLFEIQSDEKWVEKKYPKIFFIPYLDKFVKNIDIEKRQIFCTQDAFLILENS</sequence>
<protein>
    <recommendedName>
        <fullName evidence="1">Ribosome maturation factor RimM</fullName>
    </recommendedName>
</protein>
<organism>
    <name type="scientific">Campylobacter jejuni subsp. jejuni serotype O:6 (strain 81116 / NCTC 11828)</name>
    <dbReference type="NCBI Taxonomy" id="407148"/>
    <lineage>
        <taxon>Bacteria</taxon>
        <taxon>Pseudomonadati</taxon>
        <taxon>Campylobacterota</taxon>
        <taxon>Epsilonproteobacteria</taxon>
        <taxon>Campylobacterales</taxon>
        <taxon>Campylobacteraceae</taxon>
        <taxon>Campylobacter</taxon>
    </lineage>
</organism>